<gene>
    <name type="primary">4CLL4</name>
    <name type="ordered locus">Os03g0132000</name>
    <name type="ordered locus">LOC_Os03g04000</name>
    <name evidence="5" type="ORF">OsJ_09299</name>
</gene>
<reference key="1">
    <citation type="journal article" date="2005" name="Genome Res.">
        <title>Sequence, annotation, and analysis of synteny between rice chromosome 3 and diverged grass species.</title>
        <authorList>
            <consortium name="The rice chromosome 3 sequencing consortium"/>
            <person name="Buell C.R."/>
            <person name="Yuan Q."/>
            <person name="Ouyang S."/>
            <person name="Liu J."/>
            <person name="Zhu W."/>
            <person name="Wang A."/>
            <person name="Maiti R."/>
            <person name="Haas B."/>
            <person name="Wortman J."/>
            <person name="Pertea M."/>
            <person name="Jones K.M."/>
            <person name="Kim M."/>
            <person name="Overton L."/>
            <person name="Tsitrin T."/>
            <person name="Fadrosh D."/>
            <person name="Bera J."/>
            <person name="Weaver B."/>
            <person name="Jin S."/>
            <person name="Johri S."/>
            <person name="Reardon M."/>
            <person name="Webb K."/>
            <person name="Hill J."/>
            <person name="Moffat K."/>
            <person name="Tallon L."/>
            <person name="Van Aken S."/>
            <person name="Lewis M."/>
            <person name="Utterback T."/>
            <person name="Feldblyum T."/>
            <person name="Zismann V."/>
            <person name="Iobst S."/>
            <person name="Hsiao J."/>
            <person name="de Vazeille A.R."/>
            <person name="Salzberg S.L."/>
            <person name="White O."/>
            <person name="Fraser C.M."/>
            <person name="Yu Y."/>
            <person name="Kim H."/>
            <person name="Rambo T."/>
            <person name="Currie J."/>
            <person name="Collura K."/>
            <person name="Kernodle-Thompson S."/>
            <person name="Wei F."/>
            <person name="Kudrna K."/>
            <person name="Ammiraju J.S.S."/>
            <person name="Luo M."/>
            <person name="Goicoechea J.L."/>
            <person name="Wing R.A."/>
            <person name="Henry D."/>
            <person name="Oates R."/>
            <person name="Palmer M."/>
            <person name="Pries G."/>
            <person name="Saski C."/>
            <person name="Simmons J."/>
            <person name="Soderlund C."/>
            <person name="Nelson W."/>
            <person name="de la Bastide M."/>
            <person name="Spiegel L."/>
            <person name="Nascimento L."/>
            <person name="Huang E."/>
            <person name="Preston R."/>
            <person name="Zutavern T."/>
            <person name="Palmer L."/>
            <person name="O'Shaughnessy A."/>
            <person name="Dike S."/>
            <person name="McCombie W.R."/>
            <person name="Minx P."/>
            <person name="Cordum H."/>
            <person name="Wilson R."/>
            <person name="Jin W."/>
            <person name="Lee H.R."/>
            <person name="Jiang J."/>
            <person name="Jackson S."/>
        </authorList>
    </citation>
    <scope>NUCLEOTIDE SEQUENCE [LARGE SCALE GENOMIC DNA]</scope>
    <source>
        <strain>cv. Nipponbare</strain>
    </source>
</reference>
<reference key="2">
    <citation type="journal article" date="2005" name="Nature">
        <title>The map-based sequence of the rice genome.</title>
        <authorList>
            <consortium name="International rice genome sequencing project (IRGSP)"/>
        </authorList>
    </citation>
    <scope>NUCLEOTIDE SEQUENCE [LARGE SCALE GENOMIC DNA]</scope>
    <source>
        <strain>cv. Nipponbare</strain>
    </source>
</reference>
<reference key="3">
    <citation type="journal article" date="2008" name="Nucleic Acids Res.">
        <title>The rice annotation project database (RAP-DB): 2008 update.</title>
        <authorList>
            <consortium name="The rice annotation project (RAP)"/>
        </authorList>
    </citation>
    <scope>GENOME REANNOTATION</scope>
    <source>
        <strain>cv. Nipponbare</strain>
    </source>
</reference>
<reference key="4">
    <citation type="journal article" date="2013" name="Rice">
        <title>Improvement of the Oryza sativa Nipponbare reference genome using next generation sequence and optical map data.</title>
        <authorList>
            <person name="Kawahara Y."/>
            <person name="de la Bastide M."/>
            <person name="Hamilton J.P."/>
            <person name="Kanamori H."/>
            <person name="McCombie W.R."/>
            <person name="Ouyang S."/>
            <person name="Schwartz D.C."/>
            <person name="Tanaka T."/>
            <person name="Wu J."/>
            <person name="Zhou S."/>
            <person name="Childs K.L."/>
            <person name="Davidson R.M."/>
            <person name="Lin H."/>
            <person name="Quesada-Ocampo L."/>
            <person name="Vaillancourt B."/>
            <person name="Sakai H."/>
            <person name="Lee S.S."/>
            <person name="Kim J."/>
            <person name="Numa H."/>
            <person name="Itoh T."/>
            <person name="Buell C.R."/>
            <person name="Matsumoto T."/>
        </authorList>
    </citation>
    <scope>GENOME REANNOTATION</scope>
    <source>
        <strain>cv. Nipponbare</strain>
    </source>
</reference>
<reference key="5">
    <citation type="journal article" date="2005" name="PLoS Biol.">
        <title>The genomes of Oryza sativa: a history of duplications.</title>
        <authorList>
            <person name="Yu J."/>
            <person name="Wang J."/>
            <person name="Lin W."/>
            <person name="Li S."/>
            <person name="Li H."/>
            <person name="Zhou J."/>
            <person name="Ni P."/>
            <person name="Dong W."/>
            <person name="Hu S."/>
            <person name="Zeng C."/>
            <person name="Zhang J."/>
            <person name="Zhang Y."/>
            <person name="Li R."/>
            <person name="Xu Z."/>
            <person name="Li S."/>
            <person name="Li X."/>
            <person name="Zheng H."/>
            <person name="Cong L."/>
            <person name="Lin L."/>
            <person name="Yin J."/>
            <person name="Geng J."/>
            <person name="Li G."/>
            <person name="Shi J."/>
            <person name="Liu J."/>
            <person name="Lv H."/>
            <person name="Li J."/>
            <person name="Wang J."/>
            <person name="Deng Y."/>
            <person name="Ran L."/>
            <person name="Shi X."/>
            <person name="Wang X."/>
            <person name="Wu Q."/>
            <person name="Li C."/>
            <person name="Ren X."/>
            <person name="Wang J."/>
            <person name="Wang X."/>
            <person name="Li D."/>
            <person name="Liu D."/>
            <person name="Zhang X."/>
            <person name="Ji Z."/>
            <person name="Zhao W."/>
            <person name="Sun Y."/>
            <person name="Zhang Z."/>
            <person name="Bao J."/>
            <person name="Han Y."/>
            <person name="Dong L."/>
            <person name="Ji J."/>
            <person name="Chen P."/>
            <person name="Wu S."/>
            <person name="Liu J."/>
            <person name="Xiao Y."/>
            <person name="Bu D."/>
            <person name="Tan J."/>
            <person name="Yang L."/>
            <person name="Ye C."/>
            <person name="Zhang J."/>
            <person name="Xu J."/>
            <person name="Zhou Y."/>
            <person name="Yu Y."/>
            <person name="Zhang B."/>
            <person name="Zhuang S."/>
            <person name="Wei H."/>
            <person name="Liu B."/>
            <person name="Lei M."/>
            <person name="Yu H."/>
            <person name="Li Y."/>
            <person name="Xu H."/>
            <person name="Wei S."/>
            <person name="He X."/>
            <person name="Fang L."/>
            <person name="Zhang Z."/>
            <person name="Zhang Y."/>
            <person name="Huang X."/>
            <person name="Su Z."/>
            <person name="Tong W."/>
            <person name="Li J."/>
            <person name="Tong Z."/>
            <person name="Li S."/>
            <person name="Ye J."/>
            <person name="Wang L."/>
            <person name="Fang L."/>
            <person name="Lei T."/>
            <person name="Chen C.-S."/>
            <person name="Chen H.-C."/>
            <person name="Xu Z."/>
            <person name="Li H."/>
            <person name="Huang H."/>
            <person name="Zhang F."/>
            <person name="Xu H."/>
            <person name="Li N."/>
            <person name="Zhao C."/>
            <person name="Li S."/>
            <person name="Dong L."/>
            <person name="Huang Y."/>
            <person name="Li L."/>
            <person name="Xi Y."/>
            <person name="Qi Q."/>
            <person name="Li W."/>
            <person name="Zhang B."/>
            <person name="Hu W."/>
            <person name="Zhang Y."/>
            <person name="Tian X."/>
            <person name="Jiao Y."/>
            <person name="Liang X."/>
            <person name="Jin J."/>
            <person name="Gao L."/>
            <person name="Zheng W."/>
            <person name="Hao B."/>
            <person name="Liu S.-M."/>
            <person name="Wang W."/>
            <person name="Yuan L."/>
            <person name="Cao M."/>
            <person name="McDermott J."/>
            <person name="Samudrala R."/>
            <person name="Wang J."/>
            <person name="Wong G.K.-S."/>
            <person name="Yang H."/>
        </authorList>
    </citation>
    <scope>NUCLEOTIDE SEQUENCE [LARGE SCALE GENOMIC DNA]</scope>
    <source>
        <strain>cv. Nipponbare</strain>
    </source>
</reference>
<reference key="6">
    <citation type="journal article" date="2003" name="Science">
        <title>Collection, mapping, and annotation of over 28,000 cDNA clones from japonica rice.</title>
        <authorList>
            <consortium name="The rice full-length cDNA consortium"/>
        </authorList>
    </citation>
    <scope>NUCLEOTIDE SEQUENCE [LARGE SCALE MRNA]</scope>
    <source>
        <strain>cv. Nipponbare</strain>
    </source>
</reference>
<reference key="7">
    <citation type="journal article" date="2008" name="New Phytol.">
        <title>Genome-wide analysis of a land plant-specific acyl:coenzyme A synthetase (ACS) gene family in Arabidopsis, poplar, rice and Physcomitrella.</title>
        <authorList>
            <person name="de Azevedo Souza C."/>
            <person name="Barbazuk B."/>
            <person name="Ralph S.G."/>
            <person name="Bohlmann J."/>
            <person name="Hamberger B."/>
            <person name="Douglas C.J."/>
        </authorList>
    </citation>
    <scope>GENE FAMILY</scope>
</reference>
<proteinExistence type="evidence at transcript level"/>
<evidence type="ECO:0000250" key="1">
    <source>
        <dbReference type="UniProtKB" id="O24146"/>
    </source>
</evidence>
<evidence type="ECO:0000250" key="2">
    <source>
        <dbReference type="UniProtKB" id="Q42524"/>
    </source>
</evidence>
<evidence type="ECO:0000256" key="3">
    <source>
        <dbReference type="SAM" id="MobiDB-lite"/>
    </source>
</evidence>
<evidence type="ECO:0000305" key="4"/>
<evidence type="ECO:0000312" key="5">
    <source>
        <dbReference type="EMBL" id="EEE58280.1"/>
    </source>
</evidence>
<accession>Q10S72</accession>
<accession>B7EYA8</accession>
<sequence length="552" mass="59865">MGRSPEMEVDARSGYCAATRTFRSRRADVPLPADPEVDVVSFLASRRHSGVVALVDAATGRRITFTELWRAVAGAASALAAHPVSLRKGHVALILSPNSVHFPVAALAAMSLGAVLTTANPLNTPAEIAKQVADARPVLAFTTRELLPKLPRAHDLRVVLLESARLPGDSSDPRIVATIEEISATTPDPARRKDRVTQDDPATLLYSSGTTGPSKGVVATHRSLISMVQIIMTRFRLEGSDKTETFLCTVPMFHVYGLVAFATGLLGCGATVVVLSKYELPEMLRSINAYGVTYLPLVPPILVAMVAHPKPLPLGQMRKVLSGGAPLGKELIEGFREKYPQVEILQGYGLTESTAIGASTDSAEESRRYGTAGLLSPNTEAKIVDPDSGEALPVNRTGELWIRGPYVMKGYFKNAEATQSTLTPDGWLKTGDLCYIDEDGYLFVVDRLKELIKYKGYQVPPAELEALLLTHPEVTDVAVIPFPDREVGQFPMAYIVRKKGSNLSEREVMEFVAKQVAPYKKVRKVAFVTDIPKNASGKILRKDLIKLATSKL</sequence>
<name>4CLL4_ORYSJ</name>
<keyword id="KW-0067">ATP-binding</keyword>
<keyword id="KW-0436">Ligase</keyword>
<keyword id="KW-0460">Magnesium</keyword>
<keyword id="KW-0547">Nucleotide-binding</keyword>
<keyword id="KW-1185">Reference proteome</keyword>
<feature type="chain" id="PRO_0000351630" description="4-coumarate--CoA ligase-like 4">
    <location>
        <begin position="1"/>
        <end position="552"/>
    </location>
</feature>
<feature type="region of interest" description="Disordered" evidence="3">
    <location>
        <begin position="182"/>
        <end position="205"/>
    </location>
</feature>
<feature type="region of interest" description="SBD1">
    <location>
        <begin position="279"/>
        <end position="346"/>
    </location>
</feature>
<feature type="region of interest" description="SBD2">
    <location>
        <begin position="347"/>
        <end position="411"/>
    </location>
</feature>
<feature type="compositionally biased region" description="Basic and acidic residues" evidence="3">
    <location>
        <begin position="189"/>
        <end position="198"/>
    </location>
</feature>
<feature type="binding site" evidence="1">
    <location>
        <position position="207"/>
    </location>
    <ligand>
        <name>ATP</name>
        <dbReference type="ChEBI" id="CHEBI:30616"/>
    </ligand>
</feature>
<feature type="binding site" evidence="1">
    <location>
        <position position="208"/>
    </location>
    <ligand>
        <name>ATP</name>
        <dbReference type="ChEBI" id="CHEBI:30616"/>
    </ligand>
</feature>
<feature type="binding site" evidence="1">
    <location>
        <position position="209"/>
    </location>
    <ligand>
        <name>ATP</name>
        <dbReference type="ChEBI" id="CHEBI:30616"/>
    </ligand>
</feature>
<feature type="binding site" evidence="1">
    <location>
        <position position="210"/>
    </location>
    <ligand>
        <name>ATP</name>
        <dbReference type="ChEBI" id="CHEBI:30616"/>
    </ligand>
</feature>
<feature type="binding site" evidence="1">
    <location>
        <position position="211"/>
    </location>
    <ligand>
        <name>ATP</name>
        <dbReference type="ChEBI" id="CHEBI:30616"/>
    </ligand>
</feature>
<feature type="binding site" evidence="1">
    <location>
        <position position="215"/>
    </location>
    <ligand>
        <name>ATP</name>
        <dbReference type="ChEBI" id="CHEBI:30616"/>
    </ligand>
</feature>
<feature type="binding site" evidence="1">
    <location>
        <position position="256"/>
    </location>
    <ligand>
        <name>(E)-4-coumaroyl-AMP</name>
        <dbReference type="ChEBI" id="CHEBI:192348"/>
    </ligand>
</feature>
<feature type="binding site" evidence="1">
    <location>
        <position position="277"/>
    </location>
    <ligand>
        <name>CoA</name>
        <dbReference type="ChEBI" id="CHEBI:57287"/>
    </ligand>
</feature>
<feature type="binding site" evidence="1">
    <location>
        <position position="324"/>
    </location>
    <ligand>
        <name>(E)-4-coumaroyl-AMP</name>
        <dbReference type="ChEBI" id="CHEBI:192348"/>
    </ligand>
</feature>
<feature type="binding site" evidence="1">
    <location>
        <position position="346"/>
    </location>
    <ligand>
        <name>(E)-4-coumaroyl-AMP</name>
        <dbReference type="ChEBI" id="CHEBI:192348"/>
    </ligand>
</feature>
<feature type="binding site" evidence="1">
    <location>
        <position position="346"/>
    </location>
    <ligand>
        <name>ATP</name>
        <dbReference type="ChEBI" id="CHEBI:30616"/>
    </ligand>
</feature>
<feature type="binding site" evidence="1">
    <location>
        <position position="347"/>
    </location>
    <ligand>
        <name>(E)-4-coumaroyl-AMP</name>
        <dbReference type="ChEBI" id="CHEBI:192348"/>
    </ligand>
</feature>
<feature type="binding site" evidence="1">
    <location>
        <position position="347"/>
    </location>
    <ligand>
        <name>ATP</name>
        <dbReference type="ChEBI" id="CHEBI:30616"/>
    </ligand>
</feature>
<feature type="binding site" evidence="1">
    <location>
        <position position="351"/>
    </location>
    <ligand>
        <name>(E)-4-coumaroyl-AMP</name>
        <dbReference type="ChEBI" id="CHEBI:192348"/>
    </ligand>
</feature>
<feature type="binding site" evidence="1">
    <location>
        <position position="351"/>
    </location>
    <ligand>
        <name>ATP</name>
        <dbReference type="ChEBI" id="CHEBI:30616"/>
    </ligand>
</feature>
<feature type="binding site" evidence="1">
    <location>
        <position position="432"/>
    </location>
    <ligand>
        <name>ATP</name>
        <dbReference type="ChEBI" id="CHEBI:30616"/>
    </ligand>
</feature>
<feature type="binding site" evidence="1">
    <location>
        <position position="447"/>
    </location>
    <ligand>
        <name>ATP</name>
        <dbReference type="ChEBI" id="CHEBI:30616"/>
    </ligand>
</feature>
<feature type="binding site" evidence="1">
    <location>
        <position position="449"/>
    </location>
    <ligand>
        <name>(E)-4-coumaroyl-AMP</name>
        <dbReference type="ChEBI" id="CHEBI:192348"/>
    </ligand>
</feature>
<feature type="binding site" evidence="1">
    <location>
        <position position="453"/>
    </location>
    <ligand>
        <name>(E)-4-coumaroyl-AMP</name>
        <dbReference type="ChEBI" id="CHEBI:192348"/>
    </ligand>
</feature>
<feature type="binding site" evidence="1">
    <location>
        <position position="455"/>
    </location>
    <ligand>
        <name>CoA</name>
        <dbReference type="ChEBI" id="CHEBI:57287"/>
    </ligand>
</feature>
<feature type="binding site" evidence="1">
    <location>
        <position position="456"/>
    </location>
    <ligand>
        <name>CoA</name>
        <dbReference type="ChEBI" id="CHEBI:57287"/>
    </ligand>
</feature>
<feature type="binding site" evidence="1">
    <location>
        <position position="538"/>
    </location>
    <ligand>
        <name>ATP</name>
        <dbReference type="ChEBI" id="CHEBI:30616"/>
    </ligand>
</feature>
<dbReference type="EC" id="6.2.1.12" evidence="1"/>
<dbReference type="EMBL" id="DP000009">
    <property type="protein sequence ID" value="ABF93822.1"/>
    <property type="molecule type" value="Genomic_DNA"/>
</dbReference>
<dbReference type="EMBL" id="AP008209">
    <property type="protein sequence ID" value="BAF10781.1"/>
    <property type="molecule type" value="Genomic_DNA"/>
</dbReference>
<dbReference type="EMBL" id="AP014959">
    <property type="protein sequence ID" value="BAS82148.1"/>
    <property type="molecule type" value="Genomic_DNA"/>
</dbReference>
<dbReference type="EMBL" id="CM000140">
    <property type="protein sequence ID" value="EEE58280.1"/>
    <property type="molecule type" value="Genomic_DNA"/>
</dbReference>
<dbReference type="EMBL" id="AK105769">
    <property type="protein sequence ID" value="BAG97355.1"/>
    <property type="molecule type" value="mRNA"/>
</dbReference>
<dbReference type="EMBL" id="AK121384">
    <property type="protein sequence ID" value="BAH00460.1"/>
    <property type="molecule type" value="mRNA"/>
</dbReference>
<dbReference type="RefSeq" id="XP_015629747.1">
    <property type="nucleotide sequence ID" value="XM_015774261.1"/>
</dbReference>
<dbReference type="SMR" id="Q10S72"/>
<dbReference type="FunCoup" id="Q10S72">
    <property type="interactions" value="1070"/>
</dbReference>
<dbReference type="STRING" id="39947.Q10S72"/>
<dbReference type="PaxDb" id="39947-Q10S72"/>
<dbReference type="EnsemblPlants" id="Os03t0132000-01">
    <property type="protein sequence ID" value="Os03t0132000-01"/>
    <property type="gene ID" value="Os03g0132000"/>
</dbReference>
<dbReference type="Gramene" id="Os03t0132000-01">
    <property type="protein sequence ID" value="Os03t0132000-01"/>
    <property type="gene ID" value="Os03g0132000"/>
</dbReference>
<dbReference type="KEGG" id="dosa:Os03g0132000"/>
<dbReference type="eggNOG" id="KOG1176">
    <property type="taxonomic scope" value="Eukaryota"/>
</dbReference>
<dbReference type="HOGENOM" id="CLU_000022_59_2_1"/>
<dbReference type="InParanoid" id="Q10S72"/>
<dbReference type="OMA" id="IPINPIY"/>
<dbReference type="OrthoDB" id="10253869at2759"/>
<dbReference type="PlantReactome" id="R-OSA-1119316">
    <property type="pathway name" value="Phenylpropanoid biosynthesis"/>
</dbReference>
<dbReference type="PlantReactome" id="R-OSA-1119531">
    <property type="pathway name" value="Flavonoid biosynthesis"/>
</dbReference>
<dbReference type="Proteomes" id="UP000000763">
    <property type="component" value="Chromosome 3"/>
</dbReference>
<dbReference type="Proteomes" id="UP000007752">
    <property type="component" value="Chromosome 3"/>
</dbReference>
<dbReference type="Proteomes" id="UP000059680">
    <property type="component" value="Chromosome 3"/>
</dbReference>
<dbReference type="GO" id="GO:0005777">
    <property type="term" value="C:peroxisome"/>
    <property type="evidence" value="ECO:0000318"/>
    <property type="project" value="GO_Central"/>
</dbReference>
<dbReference type="GO" id="GO:0016207">
    <property type="term" value="F:4-coumarate-CoA ligase activity"/>
    <property type="evidence" value="ECO:0007669"/>
    <property type="project" value="UniProtKB-ARBA"/>
</dbReference>
<dbReference type="GO" id="GO:0005524">
    <property type="term" value="F:ATP binding"/>
    <property type="evidence" value="ECO:0007669"/>
    <property type="project" value="UniProtKB-KW"/>
</dbReference>
<dbReference type="GO" id="GO:0016405">
    <property type="term" value="F:CoA-ligase activity"/>
    <property type="evidence" value="ECO:0000318"/>
    <property type="project" value="GO_Central"/>
</dbReference>
<dbReference type="GO" id="GO:0106290">
    <property type="term" value="F:trans-cinnamate-CoA ligase activity"/>
    <property type="evidence" value="ECO:0007669"/>
    <property type="project" value="UniProtKB-ARBA"/>
</dbReference>
<dbReference type="GO" id="GO:0009698">
    <property type="term" value="P:phenylpropanoid metabolic process"/>
    <property type="evidence" value="ECO:0007669"/>
    <property type="project" value="UniProtKB-ARBA"/>
</dbReference>
<dbReference type="CDD" id="cd05904">
    <property type="entry name" value="4CL"/>
    <property type="match status" value="1"/>
</dbReference>
<dbReference type="FunFam" id="3.30.300.30:FF:000007">
    <property type="entry name" value="4-coumarate--CoA ligase 2"/>
    <property type="match status" value="1"/>
</dbReference>
<dbReference type="FunFam" id="3.40.50.12780:FF:000003">
    <property type="entry name" value="Long-chain-fatty-acid--CoA ligase FadD"/>
    <property type="match status" value="1"/>
</dbReference>
<dbReference type="Gene3D" id="3.30.300.30">
    <property type="match status" value="1"/>
</dbReference>
<dbReference type="Gene3D" id="3.40.50.12780">
    <property type="entry name" value="N-terminal domain of ligase-like"/>
    <property type="match status" value="1"/>
</dbReference>
<dbReference type="InterPro" id="IPR025110">
    <property type="entry name" value="AMP-bd_C"/>
</dbReference>
<dbReference type="InterPro" id="IPR045851">
    <property type="entry name" value="AMP-bd_C_sf"/>
</dbReference>
<dbReference type="InterPro" id="IPR020845">
    <property type="entry name" value="AMP-binding_CS"/>
</dbReference>
<dbReference type="InterPro" id="IPR000873">
    <property type="entry name" value="AMP-dep_synth/lig_dom"/>
</dbReference>
<dbReference type="InterPro" id="IPR042099">
    <property type="entry name" value="ANL_N_sf"/>
</dbReference>
<dbReference type="PANTHER" id="PTHR24096">
    <property type="entry name" value="LONG-CHAIN-FATTY-ACID--COA LIGASE"/>
    <property type="match status" value="1"/>
</dbReference>
<dbReference type="PANTHER" id="PTHR24096:SF413">
    <property type="entry name" value="PEROXISOMAL OPC-8:0-COA LIGASE 1"/>
    <property type="match status" value="1"/>
</dbReference>
<dbReference type="Pfam" id="PF00501">
    <property type="entry name" value="AMP-binding"/>
    <property type="match status" value="1"/>
</dbReference>
<dbReference type="Pfam" id="PF13193">
    <property type="entry name" value="AMP-binding_C"/>
    <property type="match status" value="1"/>
</dbReference>
<dbReference type="SUPFAM" id="SSF56801">
    <property type="entry name" value="Acetyl-CoA synthetase-like"/>
    <property type="match status" value="1"/>
</dbReference>
<dbReference type="PROSITE" id="PS00455">
    <property type="entry name" value="AMP_BINDING"/>
    <property type="match status" value="1"/>
</dbReference>
<protein>
    <recommendedName>
        <fullName>4-coumarate--CoA ligase-like 4</fullName>
        <ecNumber evidence="1">6.2.1.12</ecNumber>
    </recommendedName>
</protein>
<organism>
    <name type="scientific">Oryza sativa subsp. japonica</name>
    <name type="common">Rice</name>
    <dbReference type="NCBI Taxonomy" id="39947"/>
    <lineage>
        <taxon>Eukaryota</taxon>
        <taxon>Viridiplantae</taxon>
        <taxon>Streptophyta</taxon>
        <taxon>Embryophyta</taxon>
        <taxon>Tracheophyta</taxon>
        <taxon>Spermatophyta</taxon>
        <taxon>Magnoliopsida</taxon>
        <taxon>Liliopsida</taxon>
        <taxon>Poales</taxon>
        <taxon>Poaceae</taxon>
        <taxon>BOP clade</taxon>
        <taxon>Oryzoideae</taxon>
        <taxon>Oryzeae</taxon>
        <taxon>Oryzinae</taxon>
        <taxon>Oryza</taxon>
        <taxon>Oryza sativa</taxon>
    </lineage>
</organism>
<comment type="function">
    <text evidence="1">Carboxylate--CoA ligase that may use 4-coumarate as substrate. Follows a two-step reaction mechanism, wherein the carboxylate substrate first undergoes adenylation by ATP, followed by a thioesterification in the presence of CoA to yield the final CoA thioester.</text>
</comment>
<comment type="catalytic activity">
    <reaction evidence="1">
        <text>(E)-4-coumarate + ATP + CoA = (E)-4-coumaroyl-CoA + AMP + diphosphate</text>
        <dbReference type="Rhea" id="RHEA:19641"/>
        <dbReference type="ChEBI" id="CHEBI:12876"/>
        <dbReference type="ChEBI" id="CHEBI:30616"/>
        <dbReference type="ChEBI" id="CHEBI:33019"/>
        <dbReference type="ChEBI" id="CHEBI:57287"/>
        <dbReference type="ChEBI" id="CHEBI:85008"/>
        <dbReference type="ChEBI" id="CHEBI:456215"/>
        <dbReference type="EC" id="6.2.1.12"/>
    </reaction>
    <physiologicalReaction direction="left-to-right" evidence="1">
        <dbReference type="Rhea" id="RHEA:19642"/>
    </physiologicalReaction>
</comment>
<comment type="catalytic activity">
    <reaction evidence="1">
        <text>(E)-4-coumarate + ATP + H(+) = (E)-4-coumaroyl-AMP + diphosphate</text>
        <dbReference type="Rhea" id="RHEA:72419"/>
        <dbReference type="ChEBI" id="CHEBI:12876"/>
        <dbReference type="ChEBI" id="CHEBI:15378"/>
        <dbReference type="ChEBI" id="CHEBI:30616"/>
        <dbReference type="ChEBI" id="CHEBI:33019"/>
        <dbReference type="ChEBI" id="CHEBI:192348"/>
    </reaction>
    <physiologicalReaction direction="left-to-right" evidence="1">
        <dbReference type="Rhea" id="RHEA:72420"/>
    </physiologicalReaction>
</comment>
<comment type="catalytic activity">
    <reaction evidence="1">
        <text>(E)-4-coumaroyl-AMP + CoA = (E)-4-coumaroyl-CoA + AMP + H(+)</text>
        <dbReference type="Rhea" id="RHEA:72423"/>
        <dbReference type="ChEBI" id="CHEBI:15378"/>
        <dbReference type="ChEBI" id="CHEBI:57287"/>
        <dbReference type="ChEBI" id="CHEBI:85008"/>
        <dbReference type="ChEBI" id="CHEBI:192348"/>
        <dbReference type="ChEBI" id="CHEBI:456215"/>
    </reaction>
    <physiologicalReaction direction="left-to-right" evidence="1">
        <dbReference type="Rhea" id="RHEA:72424"/>
    </physiologicalReaction>
</comment>
<comment type="cofactor">
    <cofactor evidence="1">
        <name>Mg(2+)</name>
        <dbReference type="ChEBI" id="CHEBI:18420"/>
    </cofactor>
</comment>
<comment type="domain">
    <text evidence="2">Both substrate-binding domains (SBD1 and SBD2) are involved in the substrate recognition, and are sufficient to confer the substrate specificity.</text>
</comment>
<comment type="similarity">
    <text evidence="4">Belongs to the ATP-dependent AMP-binding enzyme family.</text>
</comment>